<sequence length="137" mass="14855">MSDMNNPADDNNGAMDDLWAEALSEQKSTSSKSAAETVFQQFGGGDVSGTLQDIDLIMDIPVKLTVELGRTRMTIKELLRLTQGSVVALDGLAGEPLDILINGYLIAQGEVVVVADKYGVRITDIITPSERMRRLSR</sequence>
<organism>
    <name type="scientific">Escherichia coli (strain K12)</name>
    <dbReference type="NCBI Taxonomy" id="83333"/>
    <lineage>
        <taxon>Bacteria</taxon>
        <taxon>Pseudomonadati</taxon>
        <taxon>Pseudomonadota</taxon>
        <taxon>Gammaproteobacteria</taxon>
        <taxon>Enterobacterales</taxon>
        <taxon>Enterobacteriaceae</taxon>
        <taxon>Escherichia</taxon>
    </lineage>
</organism>
<proteinExistence type="evidence at protein level"/>
<keyword id="KW-0975">Bacterial flagellum</keyword>
<keyword id="KW-0997">Cell inner membrane</keyword>
<keyword id="KW-1003">Cell membrane</keyword>
<keyword id="KW-0145">Chemotaxis</keyword>
<keyword id="KW-0283">Flagellar rotation</keyword>
<keyword id="KW-0472">Membrane</keyword>
<keyword id="KW-1185">Reference proteome</keyword>
<evidence type="ECO:0000305" key="1"/>
<protein>
    <recommendedName>
        <fullName>Flagellar motor switch protein FliN</fullName>
    </recommendedName>
</protein>
<feature type="chain" id="PRO_0000184118" description="Flagellar motor switch protein FliN">
    <location>
        <begin position="1"/>
        <end position="137"/>
    </location>
</feature>
<accession>P15070</accession>
<name>FLIN_ECOLI</name>
<dbReference type="EMBL" id="M26294">
    <property type="protein sequence ID" value="AAA03207.1"/>
    <property type="molecule type" value="Unassigned_DNA"/>
</dbReference>
<dbReference type="EMBL" id="U00096">
    <property type="protein sequence ID" value="AAC75013.1"/>
    <property type="molecule type" value="Genomic_DNA"/>
</dbReference>
<dbReference type="EMBL" id="AP009048">
    <property type="protein sequence ID" value="BAA15771.1"/>
    <property type="molecule type" value="Genomic_DNA"/>
</dbReference>
<dbReference type="PIR" id="JS0111">
    <property type="entry name" value="XMECII"/>
</dbReference>
<dbReference type="RefSeq" id="NP_416456.1">
    <property type="nucleotide sequence ID" value="NC_000913.3"/>
</dbReference>
<dbReference type="RefSeq" id="WP_001282101.1">
    <property type="nucleotide sequence ID" value="NZ_LN832404.1"/>
</dbReference>
<dbReference type="SMR" id="P15070"/>
<dbReference type="BioGRID" id="4261042">
    <property type="interactions" value="381"/>
</dbReference>
<dbReference type="BioGRID" id="850780">
    <property type="interactions" value="3"/>
</dbReference>
<dbReference type="ComplexPortal" id="CPX-1082">
    <property type="entry name" value="Flagellar Motor Switch Complex, CW variant"/>
</dbReference>
<dbReference type="ComplexPortal" id="CPX-1085">
    <property type="entry name" value="Flagellar Motor Switch Complex, CCW variant"/>
</dbReference>
<dbReference type="DIP" id="DIP-1101N"/>
<dbReference type="FunCoup" id="P15070">
    <property type="interactions" value="50"/>
</dbReference>
<dbReference type="IntAct" id="P15070">
    <property type="interactions" value="10"/>
</dbReference>
<dbReference type="STRING" id="511145.b1946"/>
<dbReference type="PaxDb" id="511145-b1946"/>
<dbReference type="EnsemblBacteria" id="AAC75013">
    <property type="protein sequence ID" value="AAC75013"/>
    <property type="gene ID" value="b1946"/>
</dbReference>
<dbReference type="GeneID" id="946423"/>
<dbReference type="KEGG" id="ecj:JW1930"/>
<dbReference type="KEGG" id="eco:b1946"/>
<dbReference type="KEGG" id="ecoc:C3026_11020"/>
<dbReference type="PATRIC" id="fig|1411691.4.peg.305"/>
<dbReference type="EchoBASE" id="EB0320"/>
<dbReference type="eggNOG" id="COG1886">
    <property type="taxonomic scope" value="Bacteria"/>
</dbReference>
<dbReference type="HOGENOM" id="CLU_097058_1_1_6"/>
<dbReference type="InParanoid" id="P15070"/>
<dbReference type="OMA" id="EDMWAEA"/>
<dbReference type="OrthoDB" id="9773459at2"/>
<dbReference type="PhylomeDB" id="P15070"/>
<dbReference type="BioCyc" id="EcoCyc:FLIN-FLAGELLAR-C-RING-SWITCH"/>
<dbReference type="PRO" id="PR:P15070"/>
<dbReference type="Proteomes" id="UP000000625">
    <property type="component" value="Chromosome"/>
</dbReference>
<dbReference type="GO" id="GO:0009288">
    <property type="term" value="C:bacterial-type flagellum"/>
    <property type="evidence" value="ECO:0000303"/>
    <property type="project" value="ComplexPortal"/>
</dbReference>
<dbReference type="GO" id="GO:0009433">
    <property type="term" value="C:bacterial-type flagellum basal body, C ring"/>
    <property type="evidence" value="ECO:0000303"/>
    <property type="project" value="ComplexPortal"/>
</dbReference>
<dbReference type="GO" id="GO:0120107">
    <property type="term" value="C:bacterial-type flagellum rotor complex"/>
    <property type="evidence" value="ECO:0000303"/>
    <property type="project" value="ComplexPortal"/>
</dbReference>
<dbReference type="GO" id="GO:0005886">
    <property type="term" value="C:plasma membrane"/>
    <property type="evidence" value="ECO:0007669"/>
    <property type="project" value="UniProtKB-SubCell"/>
</dbReference>
<dbReference type="GO" id="GO:0003774">
    <property type="term" value="F:cytoskeletal motor activity"/>
    <property type="evidence" value="ECO:0007669"/>
    <property type="project" value="InterPro"/>
</dbReference>
<dbReference type="GO" id="GO:0071977">
    <property type="term" value="P:bacterial-type flagellum-dependent swimming motility"/>
    <property type="evidence" value="ECO:0000303"/>
    <property type="project" value="ComplexPortal"/>
</dbReference>
<dbReference type="GO" id="GO:0006935">
    <property type="term" value="P:chemotaxis"/>
    <property type="evidence" value="ECO:0000303"/>
    <property type="project" value="ComplexPortal"/>
</dbReference>
<dbReference type="Gene3D" id="2.30.330.10">
    <property type="entry name" value="SpoA-like"/>
    <property type="match status" value="1"/>
</dbReference>
<dbReference type="InterPro" id="IPR012826">
    <property type="entry name" value="FliN"/>
</dbReference>
<dbReference type="InterPro" id="IPR001543">
    <property type="entry name" value="FliN-like_C"/>
</dbReference>
<dbReference type="InterPro" id="IPR051469">
    <property type="entry name" value="FliN/MopA/SpaO"/>
</dbReference>
<dbReference type="InterPro" id="IPR031576">
    <property type="entry name" value="FliN_N"/>
</dbReference>
<dbReference type="InterPro" id="IPR001172">
    <property type="entry name" value="FliN_T3SS_HrcQb"/>
</dbReference>
<dbReference type="InterPro" id="IPR036429">
    <property type="entry name" value="SpoA-like_sf"/>
</dbReference>
<dbReference type="NCBIfam" id="TIGR02480">
    <property type="entry name" value="fliN"/>
    <property type="match status" value="1"/>
</dbReference>
<dbReference type="PANTHER" id="PTHR43484">
    <property type="match status" value="1"/>
</dbReference>
<dbReference type="PANTHER" id="PTHR43484:SF1">
    <property type="entry name" value="FLAGELLAR MOTOR SWITCH PROTEIN FLIN"/>
    <property type="match status" value="1"/>
</dbReference>
<dbReference type="Pfam" id="PF01052">
    <property type="entry name" value="FliMN_C"/>
    <property type="match status" value="1"/>
</dbReference>
<dbReference type="Pfam" id="PF16973">
    <property type="entry name" value="FliN_N"/>
    <property type="match status" value="1"/>
</dbReference>
<dbReference type="PRINTS" id="PR00956">
    <property type="entry name" value="FLGMOTORFLIN"/>
</dbReference>
<dbReference type="SUPFAM" id="SSF101801">
    <property type="entry name" value="Surface presentation of antigens (SPOA)"/>
    <property type="match status" value="1"/>
</dbReference>
<comment type="function">
    <text>FliN is one of three proteins (FliG, FliN, FliM) that form a switch complex that is proposed to be located at the base of the basal body. This complex interacts with the CheY and CheZ chemotaxis proteins, in addition to contacting components of the motor that determine the direction of flagellar rotation.</text>
</comment>
<comment type="interaction">
    <interactant intactId="EBI-2011987">
        <id>P15070</id>
    </interactant>
    <interactant intactId="EBI-560439">
        <id>P06974</id>
        <label>fliM</label>
    </interactant>
    <organismsDiffer>false</organismsDiffer>
    <experiments>7</experiments>
</comment>
<comment type="subcellular location">
    <subcellularLocation>
        <location>Cell inner membrane</location>
        <topology>Peripheral membrane protein</topology>
        <orientation>Cytoplasmic side</orientation>
    </subcellularLocation>
    <subcellularLocation>
        <location>Bacterial flagellum basal body</location>
    </subcellularLocation>
</comment>
<comment type="similarity">
    <text evidence="1">Belongs to the FliN/MopA/SpaO family.</text>
</comment>
<gene>
    <name type="primary">fliN</name>
    <name type="synonym">flaN</name>
    <name type="synonym">motD</name>
    <name type="ordered locus">b1946</name>
    <name type="ordered locus">JW1930</name>
</gene>
<reference key="1">
    <citation type="journal article" date="1989" name="J. Bacteriol.">
        <title>DNA sequence analysis, gene product identification, and localization of flagellar motor components of Escherichia coli.</title>
        <authorList>
            <person name="Malakooti J."/>
            <person name="Komeda Y."/>
            <person name="Matsumura P."/>
        </authorList>
    </citation>
    <scope>NUCLEOTIDE SEQUENCE [GENOMIC DNA]</scope>
    <source>
        <strain>K12</strain>
    </source>
</reference>
<reference key="2">
    <citation type="journal article" date="1996" name="DNA Res.">
        <title>A 460-kb DNA sequence of the Escherichia coli K-12 genome corresponding to the 40.1-50.0 min region on the linkage map.</title>
        <authorList>
            <person name="Itoh T."/>
            <person name="Aiba H."/>
            <person name="Baba T."/>
            <person name="Fujita K."/>
            <person name="Hayashi K."/>
            <person name="Inada T."/>
            <person name="Isono K."/>
            <person name="Kasai H."/>
            <person name="Kimura S."/>
            <person name="Kitakawa M."/>
            <person name="Kitagawa M."/>
            <person name="Makino K."/>
            <person name="Miki T."/>
            <person name="Mizobuchi K."/>
            <person name="Mori H."/>
            <person name="Mori T."/>
            <person name="Motomura K."/>
            <person name="Nakade S."/>
            <person name="Nakamura Y."/>
            <person name="Nashimoto H."/>
            <person name="Nishio Y."/>
            <person name="Oshima T."/>
            <person name="Saito N."/>
            <person name="Sampei G."/>
            <person name="Seki Y."/>
            <person name="Sivasundaram S."/>
            <person name="Tagami H."/>
            <person name="Takeda J."/>
            <person name="Takemoto K."/>
            <person name="Wada C."/>
            <person name="Yamamoto Y."/>
            <person name="Horiuchi T."/>
        </authorList>
    </citation>
    <scope>NUCLEOTIDE SEQUENCE [LARGE SCALE GENOMIC DNA]</scope>
    <source>
        <strain>K12 / W3110 / ATCC 27325 / DSM 5911</strain>
    </source>
</reference>
<reference key="3">
    <citation type="journal article" date="1997" name="Science">
        <title>The complete genome sequence of Escherichia coli K-12.</title>
        <authorList>
            <person name="Blattner F.R."/>
            <person name="Plunkett G. III"/>
            <person name="Bloch C.A."/>
            <person name="Perna N.T."/>
            <person name="Burland V."/>
            <person name="Riley M."/>
            <person name="Collado-Vides J."/>
            <person name="Glasner J.D."/>
            <person name="Rode C.K."/>
            <person name="Mayhew G.F."/>
            <person name="Gregor J."/>
            <person name="Davis N.W."/>
            <person name="Kirkpatrick H.A."/>
            <person name="Goeden M.A."/>
            <person name="Rose D.J."/>
            <person name="Mau B."/>
            <person name="Shao Y."/>
        </authorList>
    </citation>
    <scope>NUCLEOTIDE SEQUENCE [LARGE SCALE GENOMIC DNA]</scope>
    <source>
        <strain>K12 / MG1655 / ATCC 47076</strain>
    </source>
</reference>
<reference key="4">
    <citation type="journal article" date="2006" name="Mol. Syst. Biol.">
        <title>Highly accurate genome sequences of Escherichia coli K-12 strains MG1655 and W3110.</title>
        <authorList>
            <person name="Hayashi K."/>
            <person name="Morooka N."/>
            <person name="Yamamoto Y."/>
            <person name="Fujita K."/>
            <person name="Isono K."/>
            <person name="Choi S."/>
            <person name="Ohtsubo E."/>
            <person name="Baba T."/>
            <person name="Wanner B.L."/>
            <person name="Mori H."/>
            <person name="Horiuchi T."/>
        </authorList>
    </citation>
    <scope>NUCLEOTIDE SEQUENCE [LARGE SCALE GENOMIC DNA]</scope>
    <source>
        <strain>K12 / W3110 / ATCC 27325 / DSM 5911</strain>
    </source>
</reference>
<reference key="5">
    <citation type="journal article" date="2008" name="Int. Rev. Cytol.">
        <title>Flagellar motility in bacteria structure and function of flagellar motor.</title>
        <authorList>
            <person name="Terashima H."/>
            <person name="Kojima S."/>
            <person name="Homma M."/>
        </authorList>
    </citation>
    <scope>REVIEW</scope>
</reference>